<accession>Q493C8</accession>
<gene>
    <name evidence="1" type="primary">dxr</name>
    <name type="ordered locus">BPEN_283</name>
</gene>
<protein>
    <recommendedName>
        <fullName evidence="1">1-deoxy-D-xylulose 5-phosphate reductoisomerase</fullName>
        <shortName evidence="1">DXP reductoisomerase</shortName>
        <ecNumber evidence="1">1.1.1.267</ecNumber>
    </recommendedName>
    <alternativeName>
        <fullName evidence="1">1-deoxyxylulose-5-phosphate reductoisomerase</fullName>
    </alternativeName>
    <alternativeName>
        <fullName evidence="1">2-C-methyl-D-erythritol 4-phosphate synthase</fullName>
    </alternativeName>
</protein>
<keyword id="KW-0414">Isoprene biosynthesis</keyword>
<keyword id="KW-0464">Manganese</keyword>
<keyword id="KW-0479">Metal-binding</keyword>
<keyword id="KW-0521">NADP</keyword>
<keyword id="KW-0560">Oxidoreductase</keyword>
<keyword id="KW-1185">Reference proteome</keyword>
<dbReference type="EC" id="1.1.1.267" evidence="1"/>
<dbReference type="EMBL" id="CP000016">
    <property type="protein sequence ID" value="AAZ40914.1"/>
    <property type="molecule type" value="Genomic_DNA"/>
</dbReference>
<dbReference type="RefSeq" id="WP_011282821.1">
    <property type="nucleotide sequence ID" value="NC_007292.1"/>
</dbReference>
<dbReference type="SMR" id="Q493C8"/>
<dbReference type="STRING" id="291272.BPEN_283"/>
<dbReference type="KEGG" id="bpn:BPEN_283"/>
<dbReference type="eggNOG" id="COG0743">
    <property type="taxonomic scope" value="Bacteria"/>
</dbReference>
<dbReference type="HOGENOM" id="CLU_035714_0_1_6"/>
<dbReference type="OrthoDB" id="9806546at2"/>
<dbReference type="UniPathway" id="UPA00056">
    <property type="reaction ID" value="UER00092"/>
</dbReference>
<dbReference type="Proteomes" id="UP000007794">
    <property type="component" value="Chromosome"/>
</dbReference>
<dbReference type="GO" id="GO:0030604">
    <property type="term" value="F:1-deoxy-D-xylulose-5-phosphate reductoisomerase activity"/>
    <property type="evidence" value="ECO:0007669"/>
    <property type="project" value="UniProtKB-UniRule"/>
</dbReference>
<dbReference type="GO" id="GO:0030145">
    <property type="term" value="F:manganese ion binding"/>
    <property type="evidence" value="ECO:0007669"/>
    <property type="project" value="TreeGrafter"/>
</dbReference>
<dbReference type="GO" id="GO:0070402">
    <property type="term" value="F:NADPH binding"/>
    <property type="evidence" value="ECO:0007669"/>
    <property type="project" value="InterPro"/>
</dbReference>
<dbReference type="GO" id="GO:0051484">
    <property type="term" value="P:isopentenyl diphosphate biosynthetic process, methylerythritol 4-phosphate pathway involved in terpenoid biosynthetic process"/>
    <property type="evidence" value="ECO:0007669"/>
    <property type="project" value="TreeGrafter"/>
</dbReference>
<dbReference type="FunFam" id="3.40.50.720:FF:000045">
    <property type="entry name" value="1-deoxy-D-xylulose 5-phosphate reductoisomerase"/>
    <property type="match status" value="1"/>
</dbReference>
<dbReference type="Gene3D" id="1.10.1740.10">
    <property type="match status" value="1"/>
</dbReference>
<dbReference type="Gene3D" id="3.40.50.720">
    <property type="entry name" value="NAD(P)-binding Rossmann-like Domain"/>
    <property type="match status" value="1"/>
</dbReference>
<dbReference type="HAMAP" id="MF_00183">
    <property type="entry name" value="DXP_reductoisom"/>
    <property type="match status" value="1"/>
</dbReference>
<dbReference type="InterPro" id="IPR003821">
    <property type="entry name" value="DXP_reductoisomerase"/>
</dbReference>
<dbReference type="InterPro" id="IPR013644">
    <property type="entry name" value="DXP_reductoisomerase_C"/>
</dbReference>
<dbReference type="InterPro" id="IPR013512">
    <property type="entry name" value="DXP_reductoisomerase_N"/>
</dbReference>
<dbReference type="InterPro" id="IPR026877">
    <property type="entry name" value="DXPR_C"/>
</dbReference>
<dbReference type="InterPro" id="IPR036169">
    <property type="entry name" value="DXPR_C_sf"/>
</dbReference>
<dbReference type="InterPro" id="IPR036291">
    <property type="entry name" value="NAD(P)-bd_dom_sf"/>
</dbReference>
<dbReference type="NCBIfam" id="TIGR00243">
    <property type="entry name" value="Dxr"/>
    <property type="match status" value="1"/>
</dbReference>
<dbReference type="NCBIfam" id="NF003938">
    <property type="entry name" value="PRK05447.1-1"/>
    <property type="match status" value="1"/>
</dbReference>
<dbReference type="PANTHER" id="PTHR30525">
    <property type="entry name" value="1-DEOXY-D-XYLULOSE 5-PHOSPHATE REDUCTOISOMERASE"/>
    <property type="match status" value="1"/>
</dbReference>
<dbReference type="PANTHER" id="PTHR30525:SF0">
    <property type="entry name" value="1-DEOXY-D-XYLULOSE 5-PHOSPHATE REDUCTOISOMERASE, CHLOROPLASTIC"/>
    <property type="match status" value="1"/>
</dbReference>
<dbReference type="Pfam" id="PF08436">
    <property type="entry name" value="DXP_redisom_C"/>
    <property type="match status" value="1"/>
</dbReference>
<dbReference type="Pfam" id="PF02670">
    <property type="entry name" value="DXP_reductoisom"/>
    <property type="match status" value="1"/>
</dbReference>
<dbReference type="Pfam" id="PF13288">
    <property type="entry name" value="DXPR_C"/>
    <property type="match status" value="1"/>
</dbReference>
<dbReference type="PIRSF" id="PIRSF006205">
    <property type="entry name" value="Dxp_reductismrs"/>
    <property type="match status" value="1"/>
</dbReference>
<dbReference type="SUPFAM" id="SSF69055">
    <property type="entry name" value="1-deoxy-D-xylulose-5-phosphate reductoisomerase, C-terminal domain"/>
    <property type="match status" value="1"/>
</dbReference>
<dbReference type="SUPFAM" id="SSF55347">
    <property type="entry name" value="Glyceraldehyde-3-phosphate dehydrogenase-like, C-terminal domain"/>
    <property type="match status" value="1"/>
</dbReference>
<dbReference type="SUPFAM" id="SSF51735">
    <property type="entry name" value="NAD(P)-binding Rossmann-fold domains"/>
    <property type="match status" value="1"/>
</dbReference>
<sequence>MQSLTILGSTGSIGKATLSVIQQHTDKFFVHALVAKNNVAIMTEQCIAMSPKYACMISEDAARILKKNLITAGKYDIEVLSGVMHACELASTNDVDMVMSAIVGIAGLKPTFSALRAGKKILLANKETLVTGGKLFMKEANRYRACILPIDSEHNAIFQNLPEICQKSLGNTSLSECGISRIVLTASGGIFFKTPQKQLTKITPEQACVHPNWSMGRKISVDSATMMNKGLEYIEARHLFNAKPSEIEILLHPQSIVHAMVYYSDGNVLAHLAPPDMRIPIAYAMAYPKRIGLKISSNIDIYYLNKLHFDQLDNCSYPCFQLAIDADNCSQSATIILNAANEIAVEAFLRKMISFTDIPDVIRRVLDAINLNDPNDIEDILYIDQKAREKAISICVI</sequence>
<reference key="1">
    <citation type="journal article" date="2005" name="Genome Res.">
        <title>Genome sequence of Blochmannia pennsylvanicus indicates parallel evolutionary trends among bacterial mutualists of insects.</title>
        <authorList>
            <person name="Degnan P.H."/>
            <person name="Lazarus A.B."/>
            <person name="Wernegreen J.J."/>
        </authorList>
    </citation>
    <scope>NUCLEOTIDE SEQUENCE [LARGE SCALE GENOMIC DNA]</scope>
    <source>
        <strain>BPEN</strain>
    </source>
</reference>
<name>DXR_BLOPB</name>
<proteinExistence type="inferred from homology"/>
<comment type="function">
    <text evidence="1">Catalyzes the NADPH-dependent rearrangement and reduction of 1-deoxy-D-xylulose-5-phosphate (DXP) to 2-C-methyl-D-erythritol 4-phosphate (MEP).</text>
</comment>
<comment type="catalytic activity">
    <reaction evidence="1">
        <text>2-C-methyl-D-erythritol 4-phosphate + NADP(+) = 1-deoxy-D-xylulose 5-phosphate + NADPH + H(+)</text>
        <dbReference type="Rhea" id="RHEA:13717"/>
        <dbReference type="ChEBI" id="CHEBI:15378"/>
        <dbReference type="ChEBI" id="CHEBI:57783"/>
        <dbReference type="ChEBI" id="CHEBI:57792"/>
        <dbReference type="ChEBI" id="CHEBI:58262"/>
        <dbReference type="ChEBI" id="CHEBI:58349"/>
        <dbReference type="EC" id="1.1.1.267"/>
    </reaction>
    <physiologicalReaction direction="right-to-left" evidence="1">
        <dbReference type="Rhea" id="RHEA:13719"/>
    </physiologicalReaction>
</comment>
<comment type="cofactor">
    <cofactor evidence="1">
        <name>Mg(2+)</name>
        <dbReference type="ChEBI" id="CHEBI:18420"/>
    </cofactor>
    <cofactor evidence="1">
        <name>Mn(2+)</name>
        <dbReference type="ChEBI" id="CHEBI:29035"/>
    </cofactor>
</comment>
<comment type="pathway">
    <text evidence="1">Isoprenoid biosynthesis; isopentenyl diphosphate biosynthesis via DXP pathway; isopentenyl diphosphate from 1-deoxy-D-xylulose 5-phosphate: step 1/6.</text>
</comment>
<comment type="subunit">
    <text evidence="1">Homodimer.</text>
</comment>
<comment type="similarity">
    <text evidence="1">Belongs to the DXR family.</text>
</comment>
<feature type="chain" id="PRO_1000020219" description="1-deoxy-D-xylulose 5-phosphate reductoisomerase">
    <location>
        <begin position="1"/>
        <end position="397"/>
    </location>
</feature>
<feature type="binding site" evidence="1">
    <location>
        <position position="10"/>
    </location>
    <ligand>
        <name>NADPH</name>
        <dbReference type="ChEBI" id="CHEBI:57783"/>
    </ligand>
</feature>
<feature type="binding site" evidence="1">
    <location>
        <position position="11"/>
    </location>
    <ligand>
        <name>NADPH</name>
        <dbReference type="ChEBI" id="CHEBI:57783"/>
    </ligand>
</feature>
<feature type="binding site" evidence="1">
    <location>
        <position position="12"/>
    </location>
    <ligand>
        <name>NADPH</name>
        <dbReference type="ChEBI" id="CHEBI:57783"/>
    </ligand>
</feature>
<feature type="binding site" evidence="1">
    <location>
        <position position="13"/>
    </location>
    <ligand>
        <name>NADPH</name>
        <dbReference type="ChEBI" id="CHEBI:57783"/>
    </ligand>
</feature>
<feature type="binding site" evidence="1">
    <location>
        <position position="38"/>
    </location>
    <ligand>
        <name>NADPH</name>
        <dbReference type="ChEBI" id="CHEBI:57783"/>
    </ligand>
</feature>
<feature type="binding site" evidence="1">
    <location>
        <position position="125"/>
    </location>
    <ligand>
        <name>NADPH</name>
        <dbReference type="ChEBI" id="CHEBI:57783"/>
    </ligand>
</feature>
<feature type="binding site" evidence="1">
    <location>
        <position position="126"/>
    </location>
    <ligand>
        <name>1-deoxy-D-xylulose 5-phosphate</name>
        <dbReference type="ChEBI" id="CHEBI:57792"/>
    </ligand>
</feature>
<feature type="binding site" evidence="1">
    <location>
        <position position="127"/>
    </location>
    <ligand>
        <name>NADPH</name>
        <dbReference type="ChEBI" id="CHEBI:57783"/>
    </ligand>
</feature>
<feature type="binding site" evidence="1">
    <location>
        <position position="151"/>
    </location>
    <ligand>
        <name>Mn(2+)</name>
        <dbReference type="ChEBI" id="CHEBI:29035"/>
    </ligand>
</feature>
<feature type="binding site" evidence="1">
    <location>
        <position position="152"/>
    </location>
    <ligand>
        <name>1-deoxy-D-xylulose 5-phosphate</name>
        <dbReference type="ChEBI" id="CHEBI:57792"/>
    </ligand>
</feature>
<feature type="binding site" evidence="1">
    <location>
        <position position="153"/>
    </location>
    <ligand>
        <name>1-deoxy-D-xylulose 5-phosphate</name>
        <dbReference type="ChEBI" id="CHEBI:57792"/>
    </ligand>
</feature>
<feature type="binding site" evidence="1">
    <location>
        <position position="153"/>
    </location>
    <ligand>
        <name>Mn(2+)</name>
        <dbReference type="ChEBI" id="CHEBI:29035"/>
    </ligand>
</feature>
<feature type="binding site" evidence="1">
    <location>
        <position position="187"/>
    </location>
    <ligand>
        <name>1-deoxy-D-xylulose 5-phosphate</name>
        <dbReference type="ChEBI" id="CHEBI:57792"/>
    </ligand>
</feature>
<feature type="binding site" evidence="1">
    <location>
        <position position="210"/>
    </location>
    <ligand>
        <name>1-deoxy-D-xylulose 5-phosphate</name>
        <dbReference type="ChEBI" id="CHEBI:57792"/>
    </ligand>
</feature>
<feature type="binding site" evidence="1">
    <location>
        <position position="216"/>
    </location>
    <ligand>
        <name>NADPH</name>
        <dbReference type="ChEBI" id="CHEBI:57783"/>
    </ligand>
</feature>
<feature type="binding site" evidence="1">
    <location>
        <position position="223"/>
    </location>
    <ligand>
        <name>1-deoxy-D-xylulose 5-phosphate</name>
        <dbReference type="ChEBI" id="CHEBI:57792"/>
    </ligand>
</feature>
<feature type="binding site" evidence="1">
    <location>
        <position position="228"/>
    </location>
    <ligand>
        <name>1-deoxy-D-xylulose 5-phosphate</name>
        <dbReference type="ChEBI" id="CHEBI:57792"/>
    </ligand>
</feature>
<feature type="binding site" evidence="1">
    <location>
        <position position="229"/>
    </location>
    <ligand>
        <name>1-deoxy-D-xylulose 5-phosphate</name>
        <dbReference type="ChEBI" id="CHEBI:57792"/>
    </ligand>
</feature>
<feature type="binding site" evidence="1">
    <location>
        <position position="232"/>
    </location>
    <ligand>
        <name>1-deoxy-D-xylulose 5-phosphate</name>
        <dbReference type="ChEBI" id="CHEBI:57792"/>
    </ligand>
</feature>
<feature type="binding site" evidence="1">
    <location>
        <position position="232"/>
    </location>
    <ligand>
        <name>Mn(2+)</name>
        <dbReference type="ChEBI" id="CHEBI:29035"/>
    </ligand>
</feature>
<evidence type="ECO:0000255" key="1">
    <source>
        <dbReference type="HAMAP-Rule" id="MF_00183"/>
    </source>
</evidence>
<organism>
    <name type="scientific">Blochmanniella pennsylvanica (strain BPEN)</name>
    <dbReference type="NCBI Taxonomy" id="291272"/>
    <lineage>
        <taxon>Bacteria</taxon>
        <taxon>Pseudomonadati</taxon>
        <taxon>Pseudomonadota</taxon>
        <taxon>Gammaproteobacteria</taxon>
        <taxon>Enterobacterales</taxon>
        <taxon>Enterobacteriaceae</taxon>
        <taxon>ant endosymbionts</taxon>
        <taxon>Candidatus Blochmanniella</taxon>
    </lineage>
</organism>